<protein>
    <recommendedName>
        <fullName evidence="1">Valine--tRNA ligase</fullName>
        <ecNumber evidence="1">6.1.1.9</ecNumber>
    </recommendedName>
    <alternativeName>
        <fullName evidence="1">Valyl-tRNA synthetase</fullName>
        <shortName evidence="1">ValRS</shortName>
    </alternativeName>
</protein>
<feature type="chain" id="PRO_1000189247" description="Valine--tRNA ligase">
    <location>
        <begin position="1"/>
        <end position="944"/>
    </location>
</feature>
<feature type="coiled-coil region" evidence="1">
    <location>
        <begin position="878"/>
        <end position="944"/>
    </location>
</feature>
<feature type="short sequence motif" description="'HIGH' region">
    <location>
        <begin position="43"/>
        <end position="53"/>
    </location>
</feature>
<feature type="short sequence motif" description="'KMSKS' region">
    <location>
        <begin position="550"/>
        <end position="554"/>
    </location>
</feature>
<feature type="binding site" evidence="1">
    <location>
        <position position="553"/>
    </location>
    <ligand>
        <name>ATP</name>
        <dbReference type="ChEBI" id="CHEBI:30616"/>
    </ligand>
</feature>
<sequence length="944" mass="106068">MTQLASSYDPSSFESRLYAQWESAGHFKPSGSGEPYTVLLPPPNVTGTLHMGHAFQQTLMDALVRYHRMRGYDTLWQVGTDHAGIATEMVVSRNLALEGKGETRDTLGREGFIAKVWEWKAQSGDTIERQMRRLGTSSDWSRSTFTMDPQPSAAVTEAFVRWYEQGLIYRGQRLVNWDPVLKTAISDLEVENVEEDGFLWSIRYPLADGVTYEHVEHDADGVETLRETRDYLVVATTRPETMLGDTAVMVHPDDARYATLHAAQIVLPLTGRLVPVITDDYVDRAFGTGVVKVTPAHDFNDYQVGVRHDLPLINLFTVTAAINDNAPERYRGLDRYDARKLVLSELEDLGLLVETKPHKLQVPRGDRTGQVIEPYLTDQWFVKMDALAKRGLELVESGQVKFVPPNWINTYRHWMENIQDWCISRQLWWGHRIPAWFDEAGKCYVGHDEAQVRATHGLGAEVALHQDSDVLETWFSSQLWPFSTLGWPDAQAMDERGFARYLPSSVLVTGFDIIFFWVARMIMATDSFTGQVPFRDVYITGLIRDAQGQKMSKSKGNVLDPLDIIDGISIEDLVAKRTSGLMQPRMAEKIEKATRKEFPDGIIAHGADALRFTIAALATHGRDIKFDLGRAEGYKNFCNKLWNATRFALMNTEGAQFSGVPQPQTETERWILARLDAVAAEAQAHYANYRFDLLAQTLYEFAWNAFCDWFVELAKPALNGAVQDAADSTRHTLLYVLEALLRLLHPLTPFVTEELWQQVAPRLGITGDTISLQAFPQRGDVDTSGYAGAEADIEWLKAMVSALRRVRSELNVPPSKQVRLWLQAGSSDDRARVARFASQLAFLLKLEAIDWLAAGQEAPPAAAAIVGELTLLVPLEGLVDMDAERTRLDKEIKRVESEIGKCNGKLGNATFVQNAPAAVVEQERARLNDWTTQLTGLREQRAKL</sequence>
<evidence type="ECO:0000255" key="1">
    <source>
        <dbReference type="HAMAP-Rule" id="MF_02004"/>
    </source>
</evidence>
<dbReference type="EC" id="6.1.1.9" evidence="1"/>
<dbReference type="EMBL" id="AM920689">
    <property type="protein sequence ID" value="CAP53075.1"/>
    <property type="molecule type" value="Genomic_DNA"/>
</dbReference>
<dbReference type="SMR" id="B0RVI4"/>
<dbReference type="KEGG" id="xca:xcc-b100_3709"/>
<dbReference type="HOGENOM" id="CLU_001493_0_2_6"/>
<dbReference type="Proteomes" id="UP000001188">
    <property type="component" value="Chromosome"/>
</dbReference>
<dbReference type="GO" id="GO:0005829">
    <property type="term" value="C:cytosol"/>
    <property type="evidence" value="ECO:0007669"/>
    <property type="project" value="TreeGrafter"/>
</dbReference>
<dbReference type="GO" id="GO:0002161">
    <property type="term" value="F:aminoacyl-tRNA deacylase activity"/>
    <property type="evidence" value="ECO:0007669"/>
    <property type="project" value="InterPro"/>
</dbReference>
<dbReference type="GO" id="GO:0005524">
    <property type="term" value="F:ATP binding"/>
    <property type="evidence" value="ECO:0007669"/>
    <property type="project" value="UniProtKB-UniRule"/>
</dbReference>
<dbReference type="GO" id="GO:0004832">
    <property type="term" value="F:valine-tRNA ligase activity"/>
    <property type="evidence" value="ECO:0007669"/>
    <property type="project" value="UniProtKB-UniRule"/>
</dbReference>
<dbReference type="GO" id="GO:0006438">
    <property type="term" value="P:valyl-tRNA aminoacylation"/>
    <property type="evidence" value="ECO:0007669"/>
    <property type="project" value="UniProtKB-UniRule"/>
</dbReference>
<dbReference type="CDD" id="cd07962">
    <property type="entry name" value="Anticodon_Ia_Val"/>
    <property type="match status" value="1"/>
</dbReference>
<dbReference type="CDD" id="cd00817">
    <property type="entry name" value="ValRS_core"/>
    <property type="match status" value="1"/>
</dbReference>
<dbReference type="FunFam" id="1.10.287.380:FF:000001">
    <property type="entry name" value="Valine--tRNA ligase"/>
    <property type="match status" value="1"/>
</dbReference>
<dbReference type="FunFam" id="3.40.50.620:FF:000032">
    <property type="entry name" value="Valine--tRNA ligase"/>
    <property type="match status" value="1"/>
</dbReference>
<dbReference type="FunFam" id="3.40.50.620:FF:000098">
    <property type="entry name" value="Valine--tRNA ligase"/>
    <property type="match status" value="1"/>
</dbReference>
<dbReference type="FunFam" id="3.90.740.10:FF:000015">
    <property type="entry name" value="Valine--tRNA ligase"/>
    <property type="match status" value="1"/>
</dbReference>
<dbReference type="Gene3D" id="3.40.50.620">
    <property type="entry name" value="HUPs"/>
    <property type="match status" value="2"/>
</dbReference>
<dbReference type="Gene3D" id="1.10.730.10">
    <property type="entry name" value="Isoleucyl-tRNA Synthetase, Domain 1"/>
    <property type="match status" value="1"/>
</dbReference>
<dbReference type="Gene3D" id="1.10.287.380">
    <property type="entry name" value="Valyl-tRNA synthetase, C-terminal domain"/>
    <property type="match status" value="1"/>
</dbReference>
<dbReference type="Gene3D" id="3.90.740.10">
    <property type="entry name" value="Valyl/Leucyl/Isoleucyl-tRNA synthetase, editing domain"/>
    <property type="match status" value="2"/>
</dbReference>
<dbReference type="HAMAP" id="MF_02004">
    <property type="entry name" value="Val_tRNA_synth_type1"/>
    <property type="match status" value="1"/>
</dbReference>
<dbReference type="InterPro" id="IPR001412">
    <property type="entry name" value="aa-tRNA-synth_I_CS"/>
</dbReference>
<dbReference type="InterPro" id="IPR002300">
    <property type="entry name" value="aa-tRNA-synth_Ia"/>
</dbReference>
<dbReference type="InterPro" id="IPR033705">
    <property type="entry name" value="Anticodon_Ia_Val"/>
</dbReference>
<dbReference type="InterPro" id="IPR013155">
    <property type="entry name" value="M/V/L/I-tRNA-synth_anticd-bd"/>
</dbReference>
<dbReference type="InterPro" id="IPR014729">
    <property type="entry name" value="Rossmann-like_a/b/a_fold"/>
</dbReference>
<dbReference type="InterPro" id="IPR010978">
    <property type="entry name" value="tRNA-bd_arm"/>
</dbReference>
<dbReference type="InterPro" id="IPR009080">
    <property type="entry name" value="tRNAsynth_Ia_anticodon-bd"/>
</dbReference>
<dbReference type="InterPro" id="IPR037118">
    <property type="entry name" value="Val-tRNA_synth_C_sf"/>
</dbReference>
<dbReference type="InterPro" id="IPR019499">
    <property type="entry name" value="Val-tRNA_synth_tRNA-bd"/>
</dbReference>
<dbReference type="InterPro" id="IPR009008">
    <property type="entry name" value="Val/Leu/Ile-tRNA-synth_edit"/>
</dbReference>
<dbReference type="InterPro" id="IPR002303">
    <property type="entry name" value="Valyl-tRNA_ligase"/>
</dbReference>
<dbReference type="NCBIfam" id="NF004349">
    <property type="entry name" value="PRK05729.1"/>
    <property type="match status" value="1"/>
</dbReference>
<dbReference type="NCBIfam" id="TIGR00422">
    <property type="entry name" value="valS"/>
    <property type="match status" value="1"/>
</dbReference>
<dbReference type="PANTHER" id="PTHR11946:SF93">
    <property type="entry name" value="VALINE--TRNA LIGASE, CHLOROPLASTIC_MITOCHONDRIAL 2"/>
    <property type="match status" value="1"/>
</dbReference>
<dbReference type="PANTHER" id="PTHR11946">
    <property type="entry name" value="VALYL-TRNA SYNTHETASES"/>
    <property type="match status" value="1"/>
</dbReference>
<dbReference type="Pfam" id="PF08264">
    <property type="entry name" value="Anticodon_1"/>
    <property type="match status" value="1"/>
</dbReference>
<dbReference type="Pfam" id="PF00133">
    <property type="entry name" value="tRNA-synt_1"/>
    <property type="match status" value="1"/>
</dbReference>
<dbReference type="Pfam" id="PF10458">
    <property type="entry name" value="Val_tRNA-synt_C"/>
    <property type="match status" value="1"/>
</dbReference>
<dbReference type="PRINTS" id="PR00986">
    <property type="entry name" value="TRNASYNTHVAL"/>
</dbReference>
<dbReference type="SUPFAM" id="SSF47323">
    <property type="entry name" value="Anticodon-binding domain of a subclass of class I aminoacyl-tRNA synthetases"/>
    <property type="match status" value="1"/>
</dbReference>
<dbReference type="SUPFAM" id="SSF52374">
    <property type="entry name" value="Nucleotidylyl transferase"/>
    <property type="match status" value="1"/>
</dbReference>
<dbReference type="SUPFAM" id="SSF46589">
    <property type="entry name" value="tRNA-binding arm"/>
    <property type="match status" value="1"/>
</dbReference>
<dbReference type="SUPFAM" id="SSF50677">
    <property type="entry name" value="ValRS/IleRS/LeuRS editing domain"/>
    <property type="match status" value="1"/>
</dbReference>
<dbReference type="PROSITE" id="PS00178">
    <property type="entry name" value="AA_TRNA_LIGASE_I"/>
    <property type="match status" value="1"/>
</dbReference>
<comment type="function">
    <text evidence="1">Catalyzes the attachment of valine to tRNA(Val). As ValRS can inadvertently accommodate and process structurally similar amino acids such as threonine, to avoid such errors, it has a 'posttransfer' editing activity that hydrolyzes mischarged Thr-tRNA(Val) in a tRNA-dependent manner.</text>
</comment>
<comment type="catalytic activity">
    <reaction evidence="1">
        <text>tRNA(Val) + L-valine + ATP = L-valyl-tRNA(Val) + AMP + diphosphate</text>
        <dbReference type="Rhea" id="RHEA:10704"/>
        <dbReference type="Rhea" id="RHEA-COMP:9672"/>
        <dbReference type="Rhea" id="RHEA-COMP:9708"/>
        <dbReference type="ChEBI" id="CHEBI:30616"/>
        <dbReference type="ChEBI" id="CHEBI:33019"/>
        <dbReference type="ChEBI" id="CHEBI:57762"/>
        <dbReference type="ChEBI" id="CHEBI:78442"/>
        <dbReference type="ChEBI" id="CHEBI:78537"/>
        <dbReference type="ChEBI" id="CHEBI:456215"/>
        <dbReference type="EC" id="6.1.1.9"/>
    </reaction>
</comment>
<comment type="subunit">
    <text evidence="1">Monomer.</text>
</comment>
<comment type="subcellular location">
    <subcellularLocation>
        <location evidence="1">Cytoplasm</location>
    </subcellularLocation>
</comment>
<comment type="domain">
    <text evidence="1">ValRS has two distinct active sites: one for aminoacylation and one for editing. The misactivated threonine is translocated from the active site to the editing site.</text>
</comment>
<comment type="domain">
    <text evidence="1">The C-terminal coiled-coil domain is crucial for aminoacylation activity.</text>
</comment>
<comment type="similarity">
    <text evidence="1">Belongs to the class-I aminoacyl-tRNA synthetase family. ValS type 1 subfamily.</text>
</comment>
<proteinExistence type="inferred from homology"/>
<name>SYV_XANCB</name>
<organism>
    <name type="scientific">Xanthomonas campestris pv. campestris (strain B100)</name>
    <dbReference type="NCBI Taxonomy" id="509169"/>
    <lineage>
        <taxon>Bacteria</taxon>
        <taxon>Pseudomonadati</taxon>
        <taxon>Pseudomonadota</taxon>
        <taxon>Gammaproteobacteria</taxon>
        <taxon>Lysobacterales</taxon>
        <taxon>Lysobacteraceae</taxon>
        <taxon>Xanthomonas</taxon>
    </lineage>
</organism>
<reference key="1">
    <citation type="journal article" date="2008" name="J. Biotechnol.">
        <title>The genome of Xanthomonas campestris pv. campestris B100 and its use for the reconstruction of metabolic pathways involved in xanthan biosynthesis.</title>
        <authorList>
            <person name="Vorhoelter F.-J."/>
            <person name="Schneiker S."/>
            <person name="Goesmann A."/>
            <person name="Krause L."/>
            <person name="Bekel T."/>
            <person name="Kaiser O."/>
            <person name="Linke B."/>
            <person name="Patschkowski T."/>
            <person name="Rueckert C."/>
            <person name="Schmid J."/>
            <person name="Sidhu V.K."/>
            <person name="Sieber V."/>
            <person name="Tauch A."/>
            <person name="Watt S.A."/>
            <person name="Weisshaar B."/>
            <person name="Becker A."/>
            <person name="Niehaus K."/>
            <person name="Puehler A."/>
        </authorList>
    </citation>
    <scope>NUCLEOTIDE SEQUENCE [LARGE SCALE GENOMIC DNA]</scope>
    <source>
        <strain>B100</strain>
    </source>
</reference>
<gene>
    <name evidence="1" type="primary">valS</name>
    <name type="ordered locus">xcc-b100_3709</name>
</gene>
<accession>B0RVI4</accession>
<keyword id="KW-0030">Aminoacyl-tRNA synthetase</keyword>
<keyword id="KW-0067">ATP-binding</keyword>
<keyword id="KW-0175">Coiled coil</keyword>
<keyword id="KW-0963">Cytoplasm</keyword>
<keyword id="KW-0436">Ligase</keyword>
<keyword id="KW-0547">Nucleotide-binding</keyword>
<keyword id="KW-0648">Protein biosynthesis</keyword>